<organism>
    <name type="scientific">Acinetobacter baylyi (strain ATCC 33305 / BD413 / ADP1)</name>
    <dbReference type="NCBI Taxonomy" id="62977"/>
    <lineage>
        <taxon>Bacteria</taxon>
        <taxon>Pseudomonadati</taxon>
        <taxon>Pseudomonadota</taxon>
        <taxon>Gammaproteobacteria</taxon>
        <taxon>Moraxellales</taxon>
        <taxon>Moraxellaceae</taxon>
        <taxon>Acinetobacter</taxon>
    </lineage>
</organism>
<sequence>MRVIVLGSGVIGVASAYYLAQQGAHVTVLDRQTGPAEETSFGNAGQISPGYSTPWAAPGIPFKAVKWMFQHHAPLAINLDGSMWQLQWMAQMLKNCNPQSYSQNKERMMRVAEYSRDCLKSLRETTGISYENRAKGTLQVFRKEAQLEAVQRDIEVLQECGVSYELLYQDDLARVEPALEHAKDKLVGGLHLPNDETGDCYLFTNALAQKAKELGVNFQFNQNVEGLVVEGDEIKGVRVNGQVLKADRYVLAFGSYSRDFLKPLALNLPVYPVKGYSLTIPIVQPEFAPQSTVLDETYKIAITRFDQRIRVGGMAELSGFNLGLNQDRRATLEMVTQDLFPGGNMAEASFWTGLRPMTPDSTPIIGATRFKNLFLNTGHGTLGWTMACGSGKLISDIVLSHQTEISTEGLSLQRYSTAA</sequence>
<reference key="1">
    <citation type="journal article" date="2004" name="Nucleic Acids Res.">
        <title>Unique features revealed by the genome sequence of Acinetobacter sp. ADP1, a versatile and naturally transformation competent bacterium.</title>
        <authorList>
            <person name="Barbe V."/>
            <person name="Vallenet D."/>
            <person name="Fonknechten N."/>
            <person name="Kreimeyer A."/>
            <person name="Oztas S."/>
            <person name="Labarre L."/>
            <person name="Cruveiller S."/>
            <person name="Robert C."/>
            <person name="Duprat S."/>
            <person name="Wincker P."/>
            <person name="Ornston L.N."/>
            <person name="Weissenbach J."/>
            <person name="Marliere P."/>
            <person name="Cohen G.N."/>
            <person name="Medigue C."/>
        </authorList>
    </citation>
    <scope>NUCLEOTIDE SEQUENCE [LARGE SCALE GENOMIC DNA]</scope>
    <source>
        <strain>ATCC 33305 / BD413 / ADP1</strain>
    </source>
</reference>
<protein>
    <recommendedName>
        <fullName evidence="1">D-amino acid dehydrogenase</fullName>
        <ecNumber evidence="1">1.4.99.-</ecNumber>
    </recommendedName>
</protein>
<proteinExistence type="inferred from homology"/>
<feature type="chain" id="PRO_1000066066" description="D-amino acid dehydrogenase">
    <location>
        <begin position="1"/>
        <end position="419"/>
    </location>
</feature>
<feature type="binding site" evidence="1">
    <location>
        <begin position="3"/>
        <end position="17"/>
    </location>
    <ligand>
        <name>FAD</name>
        <dbReference type="ChEBI" id="CHEBI:57692"/>
    </ligand>
</feature>
<comment type="function">
    <text evidence="1">Oxidative deamination of D-amino acids.</text>
</comment>
<comment type="catalytic activity">
    <reaction evidence="1">
        <text>a D-alpha-amino acid + A + H2O = a 2-oxocarboxylate + AH2 + NH4(+)</text>
        <dbReference type="Rhea" id="RHEA:18125"/>
        <dbReference type="ChEBI" id="CHEBI:13193"/>
        <dbReference type="ChEBI" id="CHEBI:15377"/>
        <dbReference type="ChEBI" id="CHEBI:17499"/>
        <dbReference type="ChEBI" id="CHEBI:28938"/>
        <dbReference type="ChEBI" id="CHEBI:35179"/>
        <dbReference type="ChEBI" id="CHEBI:59871"/>
    </reaction>
</comment>
<comment type="cofactor">
    <cofactor evidence="1">
        <name>FAD</name>
        <dbReference type="ChEBI" id="CHEBI:57692"/>
    </cofactor>
</comment>
<comment type="pathway">
    <text>Amino-acid degradation; D-alanine degradation; NH(3) and pyruvate from D-alanine: step 1/1.</text>
</comment>
<comment type="similarity">
    <text evidence="1">Belongs to the DadA oxidoreductase family.</text>
</comment>
<dbReference type="EC" id="1.4.99.-" evidence="1"/>
<dbReference type="EMBL" id="CR543861">
    <property type="protein sequence ID" value="CAG67092.1"/>
    <property type="molecule type" value="Genomic_DNA"/>
</dbReference>
<dbReference type="RefSeq" id="WP_004930721.1">
    <property type="nucleotide sequence ID" value="NC_005966.1"/>
</dbReference>
<dbReference type="SMR" id="Q6FFR5"/>
<dbReference type="STRING" id="202950.GCA_001485005_01853"/>
<dbReference type="GeneID" id="45232637"/>
<dbReference type="KEGG" id="aci:ACIAD0115"/>
<dbReference type="eggNOG" id="COG0665">
    <property type="taxonomic scope" value="Bacteria"/>
</dbReference>
<dbReference type="HOGENOM" id="CLU_007884_9_2_6"/>
<dbReference type="OrthoDB" id="9805337at2"/>
<dbReference type="BioCyc" id="ASP62977:ACIAD_RS00535-MONOMER"/>
<dbReference type="UniPathway" id="UPA00043">
    <property type="reaction ID" value="UER00498"/>
</dbReference>
<dbReference type="Proteomes" id="UP000000430">
    <property type="component" value="Chromosome"/>
</dbReference>
<dbReference type="GO" id="GO:0005737">
    <property type="term" value="C:cytoplasm"/>
    <property type="evidence" value="ECO:0007669"/>
    <property type="project" value="TreeGrafter"/>
</dbReference>
<dbReference type="GO" id="GO:0005886">
    <property type="term" value="C:plasma membrane"/>
    <property type="evidence" value="ECO:0007669"/>
    <property type="project" value="TreeGrafter"/>
</dbReference>
<dbReference type="GO" id="GO:0008718">
    <property type="term" value="F:D-amino-acid dehydrogenase activity"/>
    <property type="evidence" value="ECO:0007669"/>
    <property type="project" value="UniProtKB-UniRule"/>
</dbReference>
<dbReference type="GO" id="GO:0055130">
    <property type="term" value="P:D-alanine catabolic process"/>
    <property type="evidence" value="ECO:0007669"/>
    <property type="project" value="UniProtKB-UniPathway"/>
</dbReference>
<dbReference type="FunFam" id="3.50.50.60:FF:000020">
    <property type="entry name" value="D-amino acid dehydrogenase"/>
    <property type="match status" value="1"/>
</dbReference>
<dbReference type="Gene3D" id="3.30.9.10">
    <property type="entry name" value="D-Amino Acid Oxidase, subunit A, domain 2"/>
    <property type="match status" value="1"/>
</dbReference>
<dbReference type="Gene3D" id="3.50.50.60">
    <property type="entry name" value="FAD/NAD(P)-binding domain"/>
    <property type="match status" value="2"/>
</dbReference>
<dbReference type="HAMAP" id="MF_01202">
    <property type="entry name" value="DadA"/>
    <property type="match status" value="1"/>
</dbReference>
<dbReference type="InterPro" id="IPR023080">
    <property type="entry name" value="DadA"/>
</dbReference>
<dbReference type="InterPro" id="IPR006076">
    <property type="entry name" value="FAD-dep_OxRdtase"/>
</dbReference>
<dbReference type="InterPro" id="IPR036188">
    <property type="entry name" value="FAD/NAD-bd_sf"/>
</dbReference>
<dbReference type="NCBIfam" id="NF001933">
    <property type="entry name" value="PRK00711.1"/>
    <property type="match status" value="1"/>
</dbReference>
<dbReference type="PANTHER" id="PTHR13847:SF280">
    <property type="entry name" value="D-AMINO ACID DEHYDROGENASE"/>
    <property type="match status" value="1"/>
</dbReference>
<dbReference type="PANTHER" id="PTHR13847">
    <property type="entry name" value="SARCOSINE DEHYDROGENASE-RELATED"/>
    <property type="match status" value="1"/>
</dbReference>
<dbReference type="Pfam" id="PF01266">
    <property type="entry name" value="DAO"/>
    <property type="match status" value="1"/>
</dbReference>
<dbReference type="SUPFAM" id="SSF54373">
    <property type="entry name" value="FAD-linked reductases, C-terminal domain"/>
    <property type="match status" value="1"/>
</dbReference>
<dbReference type="SUPFAM" id="SSF51905">
    <property type="entry name" value="FAD/NAD(P)-binding domain"/>
    <property type="match status" value="1"/>
</dbReference>
<gene>
    <name evidence="1" type="primary">dadA</name>
    <name type="ordered locus">ACIAD0115</name>
</gene>
<keyword id="KW-0274">FAD</keyword>
<keyword id="KW-0285">Flavoprotein</keyword>
<keyword id="KW-0560">Oxidoreductase</keyword>
<evidence type="ECO:0000255" key="1">
    <source>
        <dbReference type="HAMAP-Rule" id="MF_01202"/>
    </source>
</evidence>
<name>DADA_ACIAD</name>
<accession>Q6FFR5</accession>